<reference key="1">
    <citation type="journal article" date="1998" name="J. Biol. Chem.">
        <title>Molecular cloning and characterization of p56dok-2 defines a new family of RasGAP-binding proteins.</title>
        <authorList>
            <person name="Di Cristofano A."/>
            <person name="Carpino N."/>
            <person name="Dunant N."/>
            <person name="Friedland G."/>
            <person name="Kobayashi R."/>
            <person name="Strife A."/>
            <person name="Wisniewski D."/>
            <person name="Clarkson B."/>
            <person name="Pandolfi P.P."/>
            <person name="Resh M.D."/>
        </authorList>
    </citation>
    <scope>NUCLEOTIDE SEQUENCE [MRNA]</scope>
    <scope>PROTEIN SEQUENCE OF 8-21; 30-49; 59-89 AND 128-149</scope>
    <scope>TISSUE SPECIFICITY</scope>
    <scope>INTERACTION WITH RASGAP</scope>
    <scope>VARIANT PRO-152</scope>
</reference>
<reference key="2">
    <citation type="journal article" date="2004" name="Genome Res.">
        <title>The status, quality, and expansion of the NIH full-length cDNA project: the Mammalian Gene Collection (MGC).</title>
        <authorList>
            <consortium name="The MGC Project Team"/>
        </authorList>
    </citation>
    <scope>NUCLEOTIDE SEQUENCE [LARGE SCALE MRNA]</scope>
    <source>
        <tissue>Brain</tissue>
    </source>
</reference>
<reference key="3">
    <citation type="journal article" date="2004" name="Anal. Chem.">
        <title>Robust phosphoproteomic profiling of tyrosine phosphorylation sites from human T cells using immobilized metal affinity chromatography and tandem mass spectrometry.</title>
        <authorList>
            <person name="Brill L.M."/>
            <person name="Salomon A.R."/>
            <person name="Ficarro S.B."/>
            <person name="Mukherji M."/>
            <person name="Stettler-Gill M."/>
            <person name="Peters E.C."/>
        </authorList>
    </citation>
    <scope>PHOSPHORYLATION [LARGE SCALE ANALYSIS] AT TYR-299</scope>
    <scope>IDENTIFICATION BY MASS SPECTROMETRY [LARGE SCALE ANALYSIS]</scope>
    <source>
        <tissue>Leukemic T-cell</tissue>
    </source>
</reference>
<reference key="4">
    <citation type="journal article" date="2005" name="Nat. Biotechnol.">
        <title>Immunoaffinity profiling of tyrosine phosphorylation in cancer cells.</title>
        <authorList>
            <person name="Rush J."/>
            <person name="Moritz A."/>
            <person name="Lee K.A."/>
            <person name="Guo A."/>
            <person name="Goss V.L."/>
            <person name="Spek E.J."/>
            <person name="Zhang H."/>
            <person name="Zha X.-M."/>
            <person name="Polakiewicz R.D."/>
            <person name="Comb M.J."/>
        </authorList>
    </citation>
    <scope>PHOSPHORYLATION [LARGE SCALE ANALYSIS] AT TYR-299</scope>
    <scope>IDENTIFICATION BY MASS SPECTROMETRY [LARGE SCALE ANALYSIS]</scope>
</reference>
<reference key="5">
    <citation type="journal article" date="2009" name="Sci. Signal.">
        <title>Quantitative phosphoproteomic analysis of T cell receptor signaling reveals system-wide modulation of protein-protein interactions.</title>
        <authorList>
            <person name="Mayya V."/>
            <person name="Lundgren D.H."/>
            <person name="Hwang S.-I."/>
            <person name="Rezaul K."/>
            <person name="Wu L."/>
            <person name="Eng J.K."/>
            <person name="Rodionov V."/>
            <person name="Han D.K."/>
        </authorList>
    </citation>
    <scope>PHOSPHORYLATION [LARGE SCALE ANALYSIS] AT TYR-299</scope>
    <scope>IDENTIFICATION BY MASS SPECTROMETRY [LARGE SCALE ANALYSIS]</scope>
    <source>
        <tissue>Leukemic T-cell</tissue>
    </source>
</reference>
<reference key="6">
    <citation type="journal article" date="2013" name="J. Proteome Res.">
        <title>Toward a comprehensive characterization of a human cancer cell phosphoproteome.</title>
        <authorList>
            <person name="Zhou H."/>
            <person name="Di Palma S."/>
            <person name="Preisinger C."/>
            <person name="Peng M."/>
            <person name="Polat A.N."/>
            <person name="Heck A.J."/>
            <person name="Mohammed S."/>
        </authorList>
    </citation>
    <scope>PHOSPHORYLATION [LARGE SCALE ANALYSIS] AT TYR-299</scope>
    <scope>IDENTIFICATION BY MASS SPECTROMETRY [LARGE SCALE ANALYSIS]</scope>
    <source>
        <tissue>Erythroleukemia</tissue>
    </source>
</reference>
<reference key="7">
    <citation type="journal article" date="2017" name="Virology">
        <title>Herpes simplex virus 1 infection of T cells causes VP11/12-dependent phosphorylation and degradation of the cellular protein Dok-2.</title>
        <authorList>
            <person name="Lahmidi S."/>
            <person name="Strunk U."/>
            <person name="Smiley J.R."/>
            <person name="Pearson A."/>
            <person name="Duplay P."/>
        </authorList>
    </citation>
    <scope>INTERACTION WITH HERPES SIMPLEX VIRUS 1 PROTEIN UL46</scope>
</reference>
<reference key="8">
    <citation type="submission" date="2006-10" db="PDB data bank">
        <title>Solution structure of the PH and IRS domains of human docking protein 2, isoform A.</title>
        <authorList>
            <consortium name="RIKEN structural genomics initiative (RSGI)"/>
        </authorList>
    </citation>
    <scope>STRUCTURE BY NMR OF 1-247</scope>
</reference>
<sequence length="412" mass="45379">MGDGAVKQGFLYLQQQQTFGKKWRRFGASLYGGSDCALARLELQEGPEKPRRCEAARKVIRLSDCLRVAEAGGEASSPRDTSAFFLETKERLYLLAAPAAERGDWVQAICLLAFPGQRKELSGPEGKQSRPCMEENELYSSAVTVGPHKEFAVTMRPTEASERCHLRGSYTLRAGESALELWGGPEPGTQLYDWPYRFLRRFGRDKVTFSFEAGRRCVSGEGNFEFETRQGNEIFLALEEAISAQKNAAPATPQPQPATIPASLPRPDSPYSRPHDSLPPPSPTTPVPAPRPRGQEGEYAVPFDAVARSLGKNFRGILAVPPQLLADPLYDSIEETLPPRPDHIYDEPEGVAALSLYDSPQEPRGEAWRRQATADRDPAGLQHVQPAGQDFSASGWQPGTEYDNVVLKKGPK</sequence>
<gene>
    <name type="primary">DOK2</name>
</gene>
<evidence type="ECO:0000250" key="1"/>
<evidence type="ECO:0000250" key="2">
    <source>
        <dbReference type="UniProtKB" id="O70469"/>
    </source>
</evidence>
<evidence type="ECO:0000255" key="3">
    <source>
        <dbReference type="PROSITE-ProRule" id="PRU00145"/>
    </source>
</evidence>
<evidence type="ECO:0000255" key="4">
    <source>
        <dbReference type="PROSITE-ProRule" id="PRU00389"/>
    </source>
</evidence>
<evidence type="ECO:0000256" key="5">
    <source>
        <dbReference type="SAM" id="MobiDB-lite"/>
    </source>
</evidence>
<evidence type="ECO:0000269" key="6">
    <source>
    </source>
</evidence>
<evidence type="ECO:0000269" key="7">
    <source>
    </source>
</evidence>
<evidence type="ECO:0000305" key="8"/>
<evidence type="ECO:0007744" key="9">
    <source>
    </source>
</evidence>
<evidence type="ECO:0007744" key="10">
    <source>
    </source>
</evidence>
<evidence type="ECO:0007744" key="11">
    <source>
    </source>
</evidence>
<evidence type="ECO:0007744" key="12">
    <source>
    </source>
</evidence>
<evidence type="ECO:0007829" key="13">
    <source>
        <dbReference type="PDB" id="2D9W"/>
    </source>
</evidence>
<evidence type="ECO:0007829" key="14">
    <source>
        <dbReference type="PDB" id="2DLW"/>
    </source>
</evidence>
<keyword id="KW-0002">3D-structure</keyword>
<keyword id="KW-0903">Direct protein sequencing</keyword>
<keyword id="KW-0945">Host-virus interaction</keyword>
<keyword id="KW-0597">Phosphoprotein</keyword>
<keyword id="KW-1267">Proteomics identification</keyword>
<keyword id="KW-1185">Reference proteome</keyword>
<accession>O60496</accession>
<accession>Q8N5A4</accession>
<protein>
    <recommendedName>
        <fullName>Docking protein 2</fullName>
    </recommendedName>
    <alternativeName>
        <fullName>Downstream of tyrosine kinase 2</fullName>
    </alternativeName>
    <alternativeName>
        <fullName>p56(dok-2)</fullName>
    </alternativeName>
</protein>
<dbReference type="EMBL" id="AF034970">
    <property type="protein sequence ID" value="AAC13265.1"/>
    <property type="molecule type" value="mRNA"/>
</dbReference>
<dbReference type="EMBL" id="BC032623">
    <property type="protein sequence ID" value="AAH32623.1"/>
    <property type="molecule type" value="mRNA"/>
</dbReference>
<dbReference type="CCDS" id="CCDS6016.1"/>
<dbReference type="RefSeq" id="NP_003965.2">
    <property type="nucleotide sequence ID" value="NM_003974.3"/>
</dbReference>
<dbReference type="PDB" id="2D9W">
    <property type="method" value="NMR"/>
    <property type="chains" value="A=1-114"/>
</dbReference>
<dbReference type="PDB" id="2DLW">
    <property type="method" value="NMR"/>
    <property type="chains" value="A=148-247"/>
</dbReference>
<dbReference type="PDBsum" id="2D9W"/>
<dbReference type="PDBsum" id="2DLW"/>
<dbReference type="BMRB" id="O60496"/>
<dbReference type="SMR" id="O60496"/>
<dbReference type="BioGRID" id="114508">
    <property type="interactions" value="112"/>
</dbReference>
<dbReference type="CORUM" id="O60496"/>
<dbReference type="FunCoup" id="O60496">
    <property type="interactions" value="803"/>
</dbReference>
<dbReference type="IntAct" id="O60496">
    <property type="interactions" value="90"/>
</dbReference>
<dbReference type="MINT" id="O60496"/>
<dbReference type="STRING" id="9606.ENSP00000276420"/>
<dbReference type="GlyGen" id="O60496">
    <property type="glycosylation" value="2 sites"/>
</dbReference>
<dbReference type="iPTMnet" id="O60496"/>
<dbReference type="PhosphoSitePlus" id="O60496"/>
<dbReference type="BioMuta" id="DOK2"/>
<dbReference type="OGP" id="O60496"/>
<dbReference type="jPOST" id="O60496"/>
<dbReference type="MassIVE" id="O60496"/>
<dbReference type="PaxDb" id="9606-ENSP00000276420"/>
<dbReference type="PeptideAtlas" id="O60496"/>
<dbReference type="ProteomicsDB" id="49433"/>
<dbReference type="Antibodypedia" id="3823">
    <property type="antibodies" value="712 antibodies from 38 providers"/>
</dbReference>
<dbReference type="DNASU" id="9046"/>
<dbReference type="Ensembl" id="ENST00000276420.9">
    <property type="protein sequence ID" value="ENSP00000276420.4"/>
    <property type="gene ID" value="ENSG00000147443.13"/>
</dbReference>
<dbReference type="GeneID" id="9046"/>
<dbReference type="KEGG" id="hsa:9046"/>
<dbReference type="MANE-Select" id="ENST00000276420.9">
    <property type="protein sequence ID" value="ENSP00000276420.4"/>
    <property type="RefSeq nucleotide sequence ID" value="NM_003974.4"/>
    <property type="RefSeq protein sequence ID" value="NP_003965.2"/>
</dbReference>
<dbReference type="UCSC" id="uc003wzy.2">
    <property type="organism name" value="human"/>
</dbReference>
<dbReference type="AGR" id="HGNC:2991"/>
<dbReference type="CTD" id="9046"/>
<dbReference type="DisGeNET" id="9046"/>
<dbReference type="GeneCards" id="DOK2"/>
<dbReference type="HGNC" id="HGNC:2991">
    <property type="gene designation" value="DOK2"/>
</dbReference>
<dbReference type="HPA" id="ENSG00000147443">
    <property type="expression patterns" value="Tissue enhanced (lung, lymphoid tissue)"/>
</dbReference>
<dbReference type="MIM" id="604997">
    <property type="type" value="gene"/>
</dbReference>
<dbReference type="neXtProt" id="NX_O60496"/>
<dbReference type="OpenTargets" id="ENSG00000147443"/>
<dbReference type="PharmGKB" id="PA27457"/>
<dbReference type="VEuPathDB" id="HostDB:ENSG00000147443"/>
<dbReference type="eggNOG" id="KOG4047">
    <property type="taxonomic scope" value="Eukaryota"/>
</dbReference>
<dbReference type="GeneTree" id="ENSGT00940000159868"/>
<dbReference type="HOGENOM" id="CLU_030101_2_0_1"/>
<dbReference type="InParanoid" id="O60496"/>
<dbReference type="OMA" id="DWTQKLC"/>
<dbReference type="OrthoDB" id="6020914at2759"/>
<dbReference type="PAN-GO" id="O60496">
    <property type="GO annotations" value="3 GO annotations based on evolutionary models"/>
</dbReference>
<dbReference type="PhylomeDB" id="O60496"/>
<dbReference type="TreeFam" id="TF324994"/>
<dbReference type="PathwayCommons" id="O60496"/>
<dbReference type="Reactome" id="R-HSA-210993">
    <property type="pathway name" value="Tie2 Signaling"/>
</dbReference>
<dbReference type="Reactome" id="R-HSA-8853659">
    <property type="pathway name" value="RET signaling"/>
</dbReference>
<dbReference type="SignaLink" id="O60496"/>
<dbReference type="SIGNOR" id="O60496"/>
<dbReference type="BioGRID-ORCS" id="9046">
    <property type="hits" value="8 hits in 1151 CRISPR screens"/>
</dbReference>
<dbReference type="ChiTaRS" id="DOK2">
    <property type="organism name" value="human"/>
</dbReference>
<dbReference type="EvolutionaryTrace" id="O60496"/>
<dbReference type="GeneWiki" id="DOK2"/>
<dbReference type="GenomeRNAi" id="9046"/>
<dbReference type="Pharos" id="O60496">
    <property type="development level" value="Tbio"/>
</dbReference>
<dbReference type="PRO" id="PR:O60496"/>
<dbReference type="Proteomes" id="UP000005640">
    <property type="component" value="Chromosome 8"/>
</dbReference>
<dbReference type="RNAct" id="O60496">
    <property type="molecule type" value="protein"/>
</dbReference>
<dbReference type="Bgee" id="ENSG00000147443">
    <property type="expression patterns" value="Expressed in granulocyte and 140 other cell types or tissues"/>
</dbReference>
<dbReference type="ExpressionAtlas" id="O60496">
    <property type="expression patterns" value="baseline and differential"/>
</dbReference>
<dbReference type="GO" id="GO:0005737">
    <property type="term" value="C:cytoplasm"/>
    <property type="evidence" value="ECO:0000318"/>
    <property type="project" value="GO_Central"/>
</dbReference>
<dbReference type="GO" id="GO:0005829">
    <property type="term" value="C:cytosol"/>
    <property type="evidence" value="ECO:0000304"/>
    <property type="project" value="Reactome"/>
</dbReference>
<dbReference type="GO" id="GO:0005886">
    <property type="term" value="C:plasma membrane"/>
    <property type="evidence" value="ECO:0000314"/>
    <property type="project" value="HPA"/>
</dbReference>
<dbReference type="GO" id="GO:0005068">
    <property type="term" value="F:transmembrane receptor protein tyrosine kinase adaptor activity"/>
    <property type="evidence" value="ECO:0007669"/>
    <property type="project" value="Ensembl"/>
</dbReference>
<dbReference type="GO" id="GO:0007169">
    <property type="term" value="P:cell surface receptor protein tyrosine kinase signaling pathway"/>
    <property type="evidence" value="ECO:0000318"/>
    <property type="project" value="GO_Central"/>
</dbReference>
<dbReference type="GO" id="GO:0007166">
    <property type="term" value="P:cell surface receptor signaling pathway"/>
    <property type="evidence" value="ECO:0000304"/>
    <property type="project" value="ProtInc"/>
</dbReference>
<dbReference type="GO" id="GO:0007265">
    <property type="term" value="P:Ras protein signal transduction"/>
    <property type="evidence" value="ECO:0000318"/>
    <property type="project" value="GO_Central"/>
</dbReference>
<dbReference type="GO" id="GO:0007165">
    <property type="term" value="P:signal transduction"/>
    <property type="evidence" value="ECO:0000304"/>
    <property type="project" value="ProtInc"/>
</dbReference>
<dbReference type="CDD" id="cd14676">
    <property type="entry name" value="PH_DOK1_2_3"/>
    <property type="match status" value="1"/>
</dbReference>
<dbReference type="CDD" id="cd01203">
    <property type="entry name" value="PTB_DOK1_DOK2_DOK3"/>
    <property type="match status" value="1"/>
</dbReference>
<dbReference type="FunFam" id="2.30.29.30:FF:000246">
    <property type="entry name" value="Docking protein 1"/>
    <property type="match status" value="1"/>
</dbReference>
<dbReference type="FunFam" id="2.30.29.30:FF:000213">
    <property type="entry name" value="Docking protein 3"/>
    <property type="match status" value="1"/>
</dbReference>
<dbReference type="Gene3D" id="2.30.29.30">
    <property type="entry name" value="Pleckstrin-homology domain (PH domain)/Phosphotyrosine-binding domain (PTB)"/>
    <property type="match status" value="2"/>
</dbReference>
<dbReference type="InterPro" id="IPR050996">
    <property type="entry name" value="Docking_Protein_DOK"/>
</dbReference>
<dbReference type="InterPro" id="IPR037751">
    <property type="entry name" value="Dok1/2/3_PTB"/>
</dbReference>
<dbReference type="InterPro" id="IPR002404">
    <property type="entry name" value="IRS_PTB"/>
</dbReference>
<dbReference type="InterPro" id="IPR011993">
    <property type="entry name" value="PH-like_dom_sf"/>
</dbReference>
<dbReference type="InterPro" id="IPR001849">
    <property type="entry name" value="PH_domain"/>
</dbReference>
<dbReference type="PANTHER" id="PTHR21258:SF14">
    <property type="entry name" value="DOCKING PROTEIN 2"/>
    <property type="match status" value="1"/>
</dbReference>
<dbReference type="PANTHER" id="PTHR21258">
    <property type="entry name" value="DOCKING PROTEIN RELATED"/>
    <property type="match status" value="1"/>
</dbReference>
<dbReference type="Pfam" id="PF02174">
    <property type="entry name" value="IRS"/>
    <property type="match status" value="1"/>
</dbReference>
<dbReference type="SMART" id="SM01244">
    <property type="entry name" value="IRS"/>
    <property type="match status" value="1"/>
</dbReference>
<dbReference type="SMART" id="SM00233">
    <property type="entry name" value="PH"/>
    <property type="match status" value="1"/>
</dbReference>
<dbReference type="SMART" id="SM00310">
    <property type="entry name" value="PTBI"/>
    <property type="match status" value="1"/>
</dbReference>
<dbReference type="SUPFAM" id="SSF50729">
    <property type="entry name" value="PH domain-like"/>
    <property type="match status" value="2"/>
</dbReference>
<dbReference type="PROSITE" id="PS51064">
    <property type="entry name" value="IRS_PTB"/>
    <property type="match status" value="1"/>
</dbReference>
<dbReference type="PROSITE" id="PS50003">
    <property type="entry name" value="PH_DOMAIN"/>
    <property type="match status" value="1"/>
</dbReference>
<organism>
    <name type="scientific">Homo sapiens</name>
    <name type="common">Human</name>
    <dbReference type="NCBI Taxonomy" id="9606"/>
    <lineage>
        <taxon>Eukaryota</taxon>
        <taxon>Metazoa</taxon>
        <taxon>Chordata</taxon>
        <taxon>Craniata</taxon>
        <taxon>Vertebrata</taxon>
        <taxon>Euteleostomi</taxon>
        <taxon>Mammalia</taxon>
        <taxon>Eutheria</taxon>
        <taxon>Euarchontoglires</taxon>
        <taxon>Primates</taxon>
        <taxon>Haplorrhini</taxon>
        <taxon>Catarrhini</taxon>
        <taxon>Hominidae</taxon>
        <taxon>Homo</taxon>
    </lineage>
</organism>
<feature type="chain" id="PRO_0000187270" description="Docking protein 2">
    <location>
        <begin position="1"/>
        <end position="412"/>
    </location>
</feature>
<feature type="domain" description="PH" evidence="3">
    <location>
        <begin position="4"/>
        <end position="114"/>
    </location>
</feature>
<feature type="domain" description="IRS-type PTB" evidence="4">
    <location>
        <begin position="147"/>
        <end position="252"/>
    </location>
</feature>
<feature type="region of interest" description="Disordered" evidence="5">
    <location>
        <begin position="246"/>
        <end position="296"/>
    </location>
</feature>
<feature type="region of interest" description="Disordered" evidence="5">
    <location>
        <begin position="359"/>
        <end position="412"/>
    </location>
</feature>
<feature type="compositionally biased region" description="Pro residues" evidence="5">
    <location>
        <begin position="277"/>
        <end position="291"/>
    </location>
</feature>
<feature type="compositionally biased region" description="Basic and acidic residues" evidence="5">
    <location>
        <begin position="361"/>
        <end position="378"/>
    </location>
</feature>
<feature type="modified residue" description="Phosphotyrosine" evidence="2">
    <location>
        <position position="271"/>
    </location>
</feature>
<feature type="modified residue" description="Phosphotyrosine" evidence="9 10 11 12">
    <location>
        <position position="299"/>
    </location>
</feature>
<feature type="modified residue" description="Phosphotyrosine" evidence="2">
    <location>
        <position position="345"/>
    </location>
</feature>
<feature type="sequence variant" id="VAR_030951" description="In dbSNP:rs1140295." evidence="7">
    <original>A</original>
    <variation>P</variation>
    <location>
        <position position="152"/>
    </location>
</feature>
<feature type="sequence variant" id="VAR_053068" description="In dbSNP:rs34215892.">
    <original>P</original>
    <variation>L</variation>
    <location>
        <position position="274"/>
    </location>
</feature>
<feature type="sequence variant" id="VAR_030952" description="In dbSNP:rs2242241.">
    <original>S</original>
    <variation>A</variation>
    <location>
        <position position="394"/>
    </location>
</feature>
<feature type="sequence conflict" description="In Ref. 1; AAC13265." evidence="8" ref="1">
    <original>L</original>
    <variation>R</variation>
    <location>
        <position position="166"/>
    </location>
</feature>
<feature type="sequence conflict" description="In Ref. 1; AAC13265." evidence="8" ref="1">
    <original>A</original>
    <variation>S</variation>
    <location>
        <position position="178"/>
    </location>
</feature>
<feature type="sequence conflict" description="In Ref. 1; AAC13265." evidence="8" ref="1">
    <original>E</original>
    <variation>K</variation>
    <location>
        <position position="347"/>
    </location>
</feature>
<feature type="sequence conflict" description="In Ref. 1; AAC13265." evidence="8" ref="1">
    <original>A</original>
    <variation>R</variation>
    <location>
        <position position="374"/>
    </location>
</feature>
<feature type="strand" evidence="13">
    <location>
        <begin position="5"/>
        <end position="13"/>
    </location>
</feature>
<feature type="strand" evidence="13">
    <location>
        <begin position="17"/>
        <end position="20"/>
    </location>
</feature>
<feature type="strand" evidence="13">
    <location>
        <begin position="25"/>
        <end position="31"/>
    </location>
</feature>
<feature type="strand" evidence="13">
    <location>
        <begin position="34"/>
        <end position="37"/>
    </location>
</feature>
<feature type="strand" evidence="13">
    <location>
        <begin position="40"/>
        <end position="44"/>
    </location>
</feature>
<feature type="strand" evidence="13">
    <location>
        <begin position="50"/>
        <end position="52"/>
    </location>
</feature>
<feature type="strand" evidence="13">
    <location>
        <begin position="57"/>
        <end position="60"/>
    </location>
</feature>
<feature type="helix" evidence="13">
    <location>
        <begin position="62"/>
        <end position="64"/>
    </location>
</feature>
<feature type="strand" evidence="13">
    <location>
        <begin position="65"/>
        <end position="70"/>
    </location>
</feature>
<feature type="strand" evidence="13">
    <location>
        <begin position="75"/>
        <end position="77"/>
    </location>
</feature>
<feature type="strand" evidence="13">
    <location>
        <begin position="82"/>
        <end position="90"/>
    </location>
</feature>
<feature type="strand" evidence="13">
    <location>
        <begin position="92"/>
        <end position="97"/>
    </location>
</feature>
<feature type="helix" evidence="13">
    <location>
        <begin position="99"/>
        <end position="113"/>
    </location>
</feature>
<feature type="strand" evidence="14">
    <location>
        <begin position="151"/>
        <end position="155"/>
    </location>
</feature>
<feature type="helix" evidence="14">
    <location>
        <begin position="159"/>
        <end position="164"/>
    </location>
</feature>
<feature type="strand" evidence="14">
    <location>
        <begin position="168"/>
        <end position="174"/>
    </location>
</feature>
<feature type="strand" evidence="14">
    <location>
        <begin position="176"/>
        <end position="180"/>
    </location>
</feature>
<feature type="strand" evidence="14">
    <location>
        <begin position="184"/>
        <end position="187"/>
    </location>
</feature>
<feature type="helix" evidence="14">
    <location>
        <begin position="196"/>
        <end position="198"/>
    </location>
</feature>
<feature type="strand" evidence="14">
    <location>
        <begin position="202"/>
        <end position="205"/>
    </location>
</feature>
<feature type="strand" evidence="14">
    <location>
        <begin position="208"/>
        <end position="213"/>
    </location>
</feature>
<feature type="strand" evidence="14">
    <location>
        <begin position="221"/>
        <end position="226"/>
    </location>
</feature>
<feature type="helix" evidence="14">
    <location>
        <begin position="231"/>
        <end position="247"/>
    </location>
</feature>
<proteinExistence type="evidence at protein level"/>
<name>DOK2_HUMAN</name>
<comment type="function">
    <text evidence="1">DOK proteins are enzymatically inert adaptor or scaffolding proteins. They provide a docking platform for the assembly of multimolecular signaling complexes. DOK2 may modulate the cellular proliferation induced by IL-4, as well as IL-2 and IL-3. May be involved in modulating Bcr-Abl signaling. Attenuates EGF-stimulated MAP kinase activation (By similarity).</text>
</comment>
<comment type="subunit">
    <text evidence="1">Interacts with phosphorylated RASGAP and EGFR. Interacts with RET and NCK. Interacts (via PH domain) with TEK/TIE2 (tyrosine phosphorylated) (By similarity).</text>
</comment>
<comment type="subunit">
    <text evidence="6">(Microbial infection) Interacts with Herpes simplex virus 1 (HHV-1) protein UL46; this interaction induces DOK2 phosphorylation and subsequent degradation.</text>
</comment>
<comment type="interaction">
    <interactant intactId="EBI-1046024">
        <id>O60496</id>
    </interactant>
    <interactant intactId="EBI-752420">
        <id>Q9NUX5</id>
        <label>POT1</label>
    </interactant>
    <organismsDiffer>false</organismsDiffer>
    <experiments>2</experiments>
</comment>
<comment type="interaction">
    <interactant intactId="EBI-1046024">
        <id>O60496</id>
    </interactant>
    <interactant intactId="EBI-7877438">
        <id>P42681</id>
        <label>TXK</label>
    </interactant>
    <organismsDiffer>false</organismsDiffer>
    <experiments>3</experiments>
</comment>
<comment type="interaction">
    <interactant intactId="EBI-1046024">
        <id>O60496</id>
    </interactant>
    <interactant intactId="EBI-515331">
        <id>P07947</id>
        <label>YES1</label>
    </interactant>
    <organismsDiffer>false</organismsDiffer>
    <experiments>3</experiments>
</comment>
<comment type="tissue specificity">
    <text evidence="7">Highly expressed in peripheral blood leukocytes, lymph nodes and spleen. Lower expression in thymus, bone marrow and fetal liver.</text>
</comment>
<comment type="domain">
    <text>PTB domain mediates receptor interaction.</text>
</comment>
<comment type="PTM">
    <text evidence="1">On immunoreceptor stimulation, phosphorylated on C-terminal tyrosine residues. Phosphorylation on Tyr-345 is required for binding to the SH2 domain of NCK. Phosphorylation on both Tyr-271 and Tyr-299 is required for interaction with RASGAP. Phosphorylated on tyrosine residues by TEK/TIE2 (By similarity).</text>
</comment>
<comment type="similarity">
    <text evidence="8">Belongs to the DOK family. Type A subfamily.</text>
</comment>